<accession>Q3Z3Y7</accession>
<dbReference type="EC" id="3.2.2.-"/>
<dbReference type="EMBL" id="CP000038">
    <property type="protein sequence ID" value="AAZ87525.1"/>
    <property type="molecule type" value="Genomic_DNA"/>
</dbReference>
<dbReference type="RefSeq" id="WP_001145133.1">
    <property type="nucleotide sequence ID" value="NC_007384.1"/>
</dbReference>
<dbReference type="BMRB" id="Q3Z3Y7"/>
<dbReference type="SMR" id="Q3Z3Y7"/>
<dbReference type="GeneID" id="93776632"/>
<dbReference type="KEGG" id="ssn:SSON_0777"/>
<dbReference type="HOGENOM" id="CLU_084247_3_1_6"/>
<dbReference type="Proteomes" id="UP000002529">
    <property type="component" value="Chromosome"/>
</dbReference>
<dbReference type="GO" id="GO:0016798">
    <property type="term" value="F:hydrolase activity, acting on glycosyl bonds"/>
    <property type="evidence" value="ECO:0007669"/>
    <property type="project" value="UniProtKB-KW"/>
</dbReference>
<dbReference type="CDD" id="cd15457">
    <property type="entry name" value="NADAR"/>
    <property type="match status" value="1"/>
</dbReference>
<dbReference type="FunFam" id="1.10.357.40:FF:000001">
    <property type="entry name" value="Swarming motility protein ybiA"/>
    <property type="match status" value="1"/>
</dbReference>
<dbReference type="Gene3D" id="1.10.357.40">
    <property type="entry name" value="YbiA-like"/>
    <property type="match status" value="1"/>
</dbReference>
<dbReference type="InterPro" id="IPR012816">
    <property type="entry name" value="NADAR"/>
</dbReference>
<dbReference type="InterPro" id="IPR037238">
    <property type="entry name" value="YbiA-like_sf"/>
</dbReference>
<dbReference type="NCBIfam" id="TIGR02464">
    <property type="entry name" value="ribofla_fusion"/>
    <property type="match status" value="1"/>
</dbReference>
<dbReference type="Pfam" id="PF08719">
    <property type="entry name" value="NADAR"/>
    <property type="match status" value="1"/>
</dbReference>
<dbReference type="SUPFAM" id="SSF143990">
    <property type="entry name" value="YbiA-like"/>
    <property type="match status" value="1"/>
</dbReference>
<evidence type="ECO:0000250" key="1">
    <source>
        <dbReference type="UniProtKB" id="P30176"/>
    </source>
</evidence>
<evidence type="ECO:0000305" key="2"/>
<protein>
    <recommendedName>
        <fullName>N-glycosidase YbiA</fullName>
        <ecNumber>3.2.2.-</ecNumber>
    </recommendedName>
    <alternativeName>
        <fullName>Riboflavin biosynthesis intermediates N-glycosidase</fullName>
    </alternativeName>
</protein>
<organism>
    <name type="scientific">Shigella sonnei (strain Ss046)</name>
    <dbReference type="NCBI Taxonomy" id="300269"/>
    <lineage>
        <taxon>Bacteria</taxon>
        <taxon>Pseudomonadati</taxon>
        <taxon>Pseudomonadota</taxon>
        <taxon>Gammaproteobacteria</taxon>
        <taxon>Enterobacterales</taxon>
        <taxon>Enterobacteriaceae</taxon>
        <taxon>Shigella</taxon>
    </lineage>
</organism>
<keyword id="KW-0326">Glycosidase</keyword>
<keyword id="KW-0378">Hydrolase</keyword>
<keyword id="KW-1185">Reference proteome</keyword>
<reference key="1">
    <citation type="journal article" date="2005" name="Nucleic Acids Res.">
        <title>Genome dynamics and diversity of Shigella species, the etiologic agents of bacillary dysentery.</title>
        <authorList>
            <person name="Yang F."/>
            <person name="Yang J."/>
            <person name="Zhang X."/>
            <person name="Chen L."/>
            <person name="Jiang Y."/>
            <person name="Yan Y."/>
            <person name="Tang X."/>
            <person name="Wang J."/>
            <person name="Xiong Z."/>
            <person name="Dong J."/>
            <person name="Xue Y."/>
            <person name="Zhu Y."/>
            <person name="Xu X."/>
            <person name="Sun L."/>
            <person name="Chen S."/>
            <person name="Nie H."/>
            <person name="Peng J."/>
            <person name="Xu J."/>
            <person name="Wang Y."/>
            <person name="Yuan Z."/>
            <person name="Wen Y."/>
            <person name="Yao Z."/>
            <person name="Shen Y."/>
            <person name="Qiang B."/>
            <person name="Hou Y."/>
            <person name="Yu J."/>
            <person name="Jin Q."/>
        </authorList>
    </citation>
    <scope>NUCLEOTIDE SEQUENCE [LARGE SCALE GENOMIC DNA]</scope>
    <source>
        <strain>Ss046</strain>
    </source>
</reference>
<proteinExistence type="inferred from homology"/>
<feature type="chain" id="PRO_0000287341" description="N-glycosidase YbiA">
    <location>
        <begin position="1"/>
        <end position="160"/>
    </location>
</feature>
<name>RIBX_SHISS</name>
<gene>
    <name type="primary">ybiA</name>
    <name type="ordered locus">SSON_0777</name>
</gene>
<sequence>MPVRAQRIQHVMQDTIINFYSTSDDYGDFSNFAAWPIKVDGKTWPTSEHYFQAQKFLDEKYREEIRRVSSPMVAARMGRNRSKPLRKNWESVKEQVMRKALRAKFEQHAELRVLLLATAPAKLVEHTENDAYWGDGGNGKGKNRLGYLLMELREQLAIEK</sequence>
<comment type="function">
    <text evidence="1">Catalyzes the hydrolysis of the N-glycosidic bond in the first two intermediates of riboflavin biosynthesis, which are highly reactive metabolites, yielding relatively innocuous products. Thus, can divert a surplus of harmful intermediates into relatively harmless products and pre-empt the damage these intermediates would otherwise do. Helps maintain flavin levels. May act on other substrates in vivo. Has no activity against GTP, nucleoside monophosphates or ADP-ribose. Is Required for swarming motility.</text>
</comment>
<comment type="catalytic activity">
    <reaction evidence="1">
        <text>2,5-diamino-6-hydroxy-4-(5-phosphoribosylamino)-pyrimidine + H2O = 2,5,6-triamino-4-hydroxypyrimidine + D-ribose 5-phosphate</text>
        <dbReference type="Rhea" id="RHEA:23436"/>
        <dbReference type="ChEBI" id="CHEBI:15377"/>
        <dbReference type="ChEBI" id="CHEBI:58614"/>
        <dbReference type="ChEBI" id="CHEBI:78346"/>
        <dbReference type="ChEBI" id="CHEBI:137796"/>
    </reaction>
</comment>
<comment type="catalytic activity">
    <reaction evidence="1">
        <text>5-amino-6-(5-phospho-D-ribosylamino)uracil + H2O = 5,6-diaminouracil + D-ribose 5-phosphate</text>
        <dbReference type="Rhea" id="RHEA:55020"/>
        <dbReference type="ChEBI" id="CHEBI:15377"/>
        <dbReference type="ChEBI" id="CHEBI:46252"/>
        <dbReference type="ChEBI" id="CHEBI:58453"/>
        <dbReference type="ChEBI" id="CHEBI:78346"/>
    </reaction>
</comment>
<comment type="similarity">
    <text evidence="2">Belongs to the YbiA family.</text>
</comment>